<name>NUOH_SHIF8</name>
<accession>Q0T2K5</accession>
<organism>
    <name type="scientific">Shigella flexneri serotype 5b (strain 8401)</name>
    <dbReference type="NCBI Taxonomy" id="373384"/>
    <lineage>
        <taxon>Bacteria</taxon>
        <taxon>Pseudomonadati</taxon>
        <taxon>Pseudomonadota</taxon>
        <taxon>Gammaproteobacteria</taxon>
        <taxon>Enterobacterales</taxon>
        <taxon>Enterobacteriaceae</taxon>
        <taxon>Shigella</taxon>
    </lineage>
</organism>
<gene>
    <name evidence="1" type="primary">nuoH</name>
    <name type="ordered locus">SFV_2349</name>
</gene>
<feature type="chain" id="PRO_0000298850" description="NADH-quinone oxidoreductase subunit H">
    <location>
        <begin position="1"/>
        <end position="325"/>
    </location>
</feature>
<feature type="transmembrane region" description="Helical" evidence="1">
    <location>
        <begin position="11"/>
        <end position="31"/>
    </location>
</feature>
<feature type="transmembrane region" description="Helical" evidence="1">
    <location>
        <begin position="81"/>
        <end position="101"/>
    </location>
</feature>
<feature type="transmembrane region" description="Helical" evidence="1">
    <location>
        <begin position="114"/>
        <end position="134"/>
    </location>
</feature>
<feature type="transmembrane region" description="Helical" evidence="1">
    <location>
        <begin position="154"/>
        <end position="174"/>
    </location>
</feature>
<feature type="transmembrane region" description="Helical" evidence="1">
    <location>
        <begin position="186"/>
        <end position="206"/>
    </location>
</feature>
<feature type="transmembrane region" description="Helical" evidence="1">
    <location>
        <begin position="237"/>
        <end position="257"/>
    </location>
</feature>
<feature type="transmembrane region" description="Helical" evidence="1">
    <location>
        <begin position="265"/>
        <end position="285"/>
    </location>
</feature>
<feature type="transmembrane region" description="Helical" evidence="1">
    <location>
        <begin position="304"/>
        <end position="324"/>
    </location>
</feature>
<proteinExistence type="inferred from homology"/>
<evidence type="ECO:0000255" key="1">
    <source>
        <dbReference type="HAMAP-Rule" id="MF_01350"/>
    </source>
</evidence>
<comment type="function">
    <text evidence="1">NDH-1 shuttles electrons from NADH, via FMN and iron-sulfur (Fe-S) centers, to quinones in the respiratory chain. The immediate electron acceptor for the enzyme in this species is believed to be ubiquinone. Couples the redox reaction to proton translocation (for every two electrons transferred, four hydrogen ions are translocated across the cytoplasmic membrane), and thus conserves the redox energy in a proton gradient. This subunit may bind ubiquinone.</text>
</comment>
<comment type="catalytic activity">
    <reaction evidence="1">
        <text>a quinone + NADH + 5 H(+)(in) = a quinol + NAD(+) + 4 H(+)(out)</text>
        <dbReference type="Rhea" id="RHEA:57888"/>
        <dbReference type="ChEBI" id="CHEBI:15378"/>
        <dbReference type="ChEBI" id="CHEBI:24646"/>
        <dbReference type="ChEBI" id="CHEBI:57540"/>
        <dbReference type="ChEBI" id="CHEBI:57945"/>
        <dbReference type="ChEBI" id="CHEBI:132124"/>
    </reaction>
</comment>
<comment type="subunit">
    <text evidence="1">NDH-1 is composed of 13 different subunits. Subunits NuoA, H, J, K, L, M, N constitute the membrane sector of the complex.</text>
</comment>
<comment type="subcellular location">
    <subcellularLocation>
        <location evidence="1">Cell inner membrane</location>
        <topology evidence="1">Multi-pass membrane protein</topology>
    </subcellularLocation>
</comment>
<comment type="similarity">
    <text evidence="1">Belongs to the complex I subunit 1 family.</text>
</comment>
<keyword id="KW-0997">Cell inner membrane</keyword>
<keyword id="KW-1003">Cell membrane</keyword>
<keyword id="KW-0472">Membrane</keyword>
<keyword id="KW-0520">NAD</keyword>
<keyword id="KW-0874">Quinone</keyword>
<keyword id="KW-1278">Translocase</keyword>
<keyword id="KW-0812">Transmembrane</keyword>
<keyword id="KW-1133">Transmembrane helix</keyword>
<keyword id="KW-0830">Ubiquinone</keyword>
<reference key="1">
    <citation type="journal article" date="2006" name="BMC Genomics">
        <title>Complete genome sequence of Shigella flexneri 5b and comparison with Shigella flexneri 2a.</title>
        <authorList>
            <person name="Nie H."/>
            <person name="Yang F."/>
            <person name="Zhang X."/>
            <person name="Yang J."/>
            <person name="Chen L."/>
            <person name="Wang J."/>
            <person name="Xiong Z."/>
            <person name="Peng J."/>
            <person name="Sun L."/>
            <person name="Dong J."/>
            <person name="Xue Y."/>
            <person name="Xu X."/>
            <person name="Chen S."/>
            <person name="Yao Z."/>
            <person name="Shen Y."/>
            <person name="Jin Q."/>
        </authorList>
    </citation>
    <scope>NUCLEOTIDE SEQUENCE [LARGE SCALE GENOMIC DNA]</scope>
    <source>
        <strain>8401</strain>
    </source>
</reference>
<sequence length="325" mass="36247">MSWISPELIEILLTILKAVVILLVVVTCGAFMSFGERRLLGLFQNRYGPNRVGWGGSLQLVADMIKMFFKEDWIPKFSDRVIFTLAPMIAFTSLLLAFAIVPVSPGWVVADLNIGILFFLMMAGLAVYAVLFAGWSSNNKYSLLGAMRASAQTLSYEVFLGLSLMGVVAQAGSFNMTDIVNSQAHVWNVIPQFFGFITFAIAGVAVCHRHPFDQPEAEQELADGYHIEYSGMKFGLFFVGEYIGIVTISALMVTLFFGGWQGPLLPPFIWFALKTAFFMMMFILIRASLPRPRYDRVMSFGWKICLPLTLINLLVTAAVILWQAQ</sequence>
<dbReference type="EC" id="7.1.1.-" evidence="1"/>
<dbReference type="EMBL" id="CP000266">
    <property type="protein sequence ID" value="ABF04460.1"/>
    <property type="molecule type" value="Genomic_DNA"/>
</dbReference>
<dbReference type="RefSeq" id="WP_000118509.1">
    <property type="nucleotide sequence ID" value="NC_008258.1"/>
</dbReference>
<dbReference type="SMR" id="Q0T2K5"/>
<dbReference type="KEGG" id="sfv:SFV_2349"/>
<dbReference type="HOGENOM" id="CLU_015134_0_1_6"/>
<dbReference type="Proteomes" id="UP000000659">
    <property type="component" value="Chromosome"/>
</dbReference>
<dbReference type="GO" id="GO:0005886">
    <property type="term" value="C:plasma membrane"/>
    <property type="evidence" value="ECO:0007669"/>
    <property type="project" value="UniProtKB-SubCell"/>
</dbReference>
<dbReference type="GO" id="GO:0003954">
    <property type="term" value="F:NADH dehydrogenase activity"/>
    <property type="evidence" value="ECO:0007669"/>
    <property type="project" value="TreeGrafter"/>
</dbReference>
<dbReference type="GO" id="GO:0016655">
    <property type="term" value="F:oxidoreductase activity, acting on NAD(P)H, quinone or similar compound as acceptor"/>
    <property type="evidence" value="ECO:0007669"/>
    <property type="project" value="UniProtKB-UniRule"/>
</dbReference>
<dbReference type="GO" id="GO:0048038">
    <property type="term" value="F:quinone binding"/>
    <property type="evidence" value="ECO:0007669"/>
    <property type="project" value="UniProtKB-KW"/>
</dbReference>
<dbReference type="GO" id="GO:0009060">
    <property type="term" value="P:aerobic respiration"/>
    <property type="evidence" value="ECO:0007669"/>
    <property type="project" value="TreeGrafter"/>
</dbReference>
<dbReference type="HAMAP" id="MF_01350">
    <property type="entry name" value="NDH1_NuoH"/>
    <property type="match status" value="1"/>
</dbReference>
<dbReference type="InterPro" id="IPR001694">
    <property type="entry name" value="NADH_UbQ_OxRdtase_su1/FPO"/>
</dbReference>
<dbReference type="InterPro" id="IPR018086">
    <property type="entry name" value="NADH_UbQ_OxRdtase_su1_CS"/>
</dbReference>
<dbReference type="NCBIfam" id="NF004740">
    <property type="entry name" value="PRK06076.1-1"/>
    <property type="match status" value="1"/>
</dbReference>
<dbReference type="NCBIfam" id="NF004741">
    <property type="entry name" value="PRK06076.1-2"/>
    <property type="match status" value="1"/>
</dbReference>
<dbReference type="PANTHER" id="PTHR11432">
    <property type="entry name" value="NADH DEHYDROGENASE SUBUNIT 1"/>
    <property type="match status" value="1"/>
</dbReference>
<dbReference type="PANTHER" id="PTHR11432:SF3">
    <property type="entry name" value="NADH-UBIQUINONE OXIDOREDUCTASE CHAIN 1"/>
    <property type="match status" value="1"/>
</dbReference>
<dbReference type="Pfam" id="PF00146">
    <property type="entry name" value="NADHdh"/>
    <property type="match status" value="1"/>
</dbReference>
<dbReference type="PROSITE" id="PS00667">
    <property type="entry name" value="COMPLEX1_ND1_1"/>
    <property type="match status" value="1"/>
</dbReference>
<dbReference type="PROSITE" id="PS00668">
    <property type="entry name" value="COMPLEX1_ND1_2"/>
    <property type="match status" value="1"/>
</dbReference>
<protein>
    <recommendedName>
        <fullName evidence="1">NADH-quinone oxidoreductase subunit H</fullName>
        <ecNumber evidence="1">7.1.1.-</ecNumber>
    </recommendedName>
    <alternativeName>
        <fullName evidence="1">NADH dehydrogenase I subunit H</fullName>
    </alternativeName>
    <alternativeName>
        <fullName evidence="1">NDH-1 subunit H</fullName>
    </alternativeName>
</protein>